<comment type="function">
    <text evidence="1">Protein S19 forms a complex with S13 that binds strongly to the 16S ribosomal RNA.</text>
</comment>
<comment type="similarity">
    <text evidence="1">Belongs to the universal ribosomal protein uS19 family.</text>
</comment>
<name>RS19_AGRFC</name>
<feature type="chain" id="PRO_0000129765" description="Small ribosomal subunit protein uS19">
    <location>
        <begin position="1"/>
        <end position="92"/>
    </location>
</feature>
<sequence length="92" mass="10431">MARSVWKGPFVDGYLLTKAEKVRESGRNEVIKIWSRRSTILPQFVGLTFGVYNGSKHVPVSVNEDMVGHKFGEFSPTRTYYGHGADKKAKRK</sequence>
<dbReference type="EMBL" id="AE007869">
    <property type="protein sequence ID" value="AAK87704.1"/>
    <property type="molecule type" value="Genomic_DNA"/>
</dbReference>
<dbReference type="PIR" id="AD2815">
    <property type="entry name" value="AD2815"/>
</dbReference>
<dbReference type="PIR" id="G97593">
    <property type="entry name" value="G97593"/>
</dbReference>
<dbReference type="RefSeq" id="NP_354919.1">
    <property type="nucleotide sequence ID" value="NC_003062.2"/>
</dbReference>
<dbReference type="RefSeq" id="WP_003507772.1">
    <property type="nucleotide sequence ID" value="NC_003062.2"/>
</dbReference>
<dbReference type="SMR" id="Q8UE22"/>
<dbReference type="STRING" id="176299.Atu1942"/>
<dbReference type="EnsemblBacteria" id="AAK87704">
    <property type="protein sequence ID" value="AAK87704"/>
    <property type="gene ID" value="Atu1942"/>
</dbReference>
<dbReference type="GeneID" id="97364689"/>
<dbReference type="KEGG" id="atu:Atu1942"/>
<dbReference type="PATRIC" id="fig|176299.10.peg.1954"/>
<dbReference type="eggNOG" id="COG0185">
    <property type="taxonomic scope" value="Bacteria"/>
</dbReference>
<dbReference type="HOGENOM" id="CLU_144911_0_1_5"/>
<dbReference type="OrthoDB" id="9797833at2"/>
<dbReference type="PhylomeDB" id="Q8UE22"/>
<dbReference type="BioCyc" id="AGRO:ATU1942-MONOMER"/>
<dbReference type="PRO" id="PR:Q8UE22"/>
<dbReference type="Proteomes" id="UP000000813">
    <property type="component" value="Chromosome circular"/>
</dbReference>
<dbReference type="GO" id="GO:0005737">
    <property type="term" value="C:cytoplasm"/>
    <property type="evidence" value="ECO:0007669"/>
    <property type="project" value="UniProtKB-ARBA"/>
</dbReference>
<dbReference type="GO" id="GO:0015935">
    <property type="term" value="C:small ribosomal subunit"/>
    <property type="evidence" value="ECO:0007669"/>
    <property type="project" value="InterPro"/>
</dbReference>
<dbReference type="GO" id="GO:0019843">
    <property type="term" value="F:rRNA binding"/>
    <property type="evidence" value="ECO:0007669"/>
    <property type="project" value="UniProtKB-UniRule"/>
</dbReference>
<dbReference type="GO" id="GO:0003735">
    <property type="term" value="F:structural constituent of ribosome"/>
    <property type="evidence" value="ECO:0007669"/>
    <property type="project" value="InterPro"/>
</dbReference>
<dbReference type="GO" id="GO:0000028">
    <property type="term" value="P:ribosomal small subunit assembly"/>
    <property type="evidence" value="ECO:0007669"/>
    <property type="project" value="TreeGrafter"/>
</dbReference>
<dbReference type="GO" id="GO:0006412">
    <property type="term" value="P:translation"/>
    <property type="evidence" value="ECO:0007669"/>
    <property type="project" value="UniProtKB-UniRule"/>
</dbReference>
<dbReference type="FunFam" id="3.30.860.10:FF:000001">
    <property type="entry name" value="30S ribosomal protein S19"/>
    <property type="match status" value="1"/>
</dbReference>
<dbReference type="Gene3D" id="3.30.860.10">
    <property type="entry name" value="30s Ribosomal Protein S19, Chain A"/>
    <property type="match status" value="1"/>
</dbReference>
<dbReference type="HAMAP" id="MF_00531">
    <property type="entry name" value="Ribosomal_uS19"/>
    <property type="match status" value="1"/>
</dbReference>
<dbReference type="InterPro" id="IPR002222">
    <property type="entry name" value="Ribosomal_uS19"/>
</dbReference>
<dbReference type="InterPro" id="IPR005732">
    <property type="entry name" value="Ribosomal_uS19_bac-type"/>
</dbReference>
<dbReference type="InterPro" id="IPR020934">
    <property type="entry name" value="Ribosomal_uS19_CS"/>
</dbReference>
<dbReference type="InterPro" id="IPR023575">
    <property type="entry name" value="Ribosomal_uS19_SF"/>
</dbReference>
<dbReference type="NCBIfam" id="TIGR01050">
    <property type="entry name" value="rpsS_bact"/>
    <property type="match status" value="1"/>
</dbReference>
<dbReference type="PANTHER" id="PTHR11880">
    <property type="entry name" value="RIBOSOMAL PROTEIN S19P FAMILY MEMBER"/>
    <property type="match status" value="1"/>
</dbReference>
<dbReference type="PANTHER" id="PTHR11880:SF8">
    <property type="entry name" value="SMALL RIBOSOMAL SUBUNIT PROTEIN US19M"/>
    <property type="match status" value="1"/>
</dbReference>
<dbReference type="Pfam" id="PF00203">
    <property type="entry name" value="Ribosomal_S19"/>
    <property type="match status" value="1"/>
</dbReference>
<dbReference type="PIRSF" id="PIRSF002144">
    <property type="entry name" value="Ribosomal_S19"/>
    <property type="match status" value="1"/>
</dbReference>
<dbReference type="PRINTS" id="PR00975">
    <property type="entry name" value="RIBOSOMALS19"/>
</dbReference>
<dbReference type="SUPFAM" id="SSF54570">
    <property type="entry name" value="Ribosomal protein S19"/>
    <property type="match status" value="1"/>
</dbReference>
<dbReference type="PROSITE" id="PS00323">
    <property type="entry name" value="RIBOSOMAL_S19"/>
    <property type="match status" value="1"/>
</dbReference>
<organism>
    <name type="scientific">Agrobacterium fabrum (strain C58 / ATCC 33970)</name>
    <name type="common">Agrobacterium tumefaciens (strain C58)</name>
    <dbReference type="NCBI Taxonomy" id="176299"/>
    <lineage>
        <taxon>Bacteria</taxon>
        <taxon>Pseudomonadati</taxon>
        <taxon>Pseudomonadota</taxon>
        <taxon>Alphaproteobacteria</taxon>
        <taxon>Hyphomicrobiales</taxon>
        <taxon>Rhizobiaceae</taxon>
        <taxon>Rhizobium/Agrobacterium group</taxon>
        <taxon>Agrobacterium</taxon>
        <taxon>Agrobacterium tumefaciens complex</taxon>
    </lineage>
</organism>
<accession>Q8UE22</accession>
<reference key="1">
    <citation type="journal article" date="2001" name="Science">
        <title>The genome of the natural genetic engineer Agrobacterium tumefaciens C58.</title>
        <authorList>
            <person name="Wood D.W."/>
            <person name="Setubal J.C."/>
            <person name="Kaul R."/>
            <person name="Monks D.E."/>
            <person name="Kitajima J.P."/>
            <person name="Okura V.K."/>
            <person name="Zhou Y."/>
            <person name="Chen L."/>
            <person name="Wood G.E."/>
            <person name="Almeida N.F. Jr."/>
            <person name="Woo L."/>
            <person name="Chen Y."/>
            <person name="Paulsen I.T."/>
            <person name="Eisen J.A."/>
            <person name="Karp P.D."/>
            <person name="Bovee D. Sr."/>
            <person name="Chapman P."/>
            <person name="Clendenning J."/>
            <person name="Deatherage G."/>
            <person name="Gillet W."/>
            <person name="Grant C."/>
            <person name="Kutyavin T."/>
            <person name="Levy R."/>
            <person name="Li M.-J."/>
            <person name="McClelland E."/>
            <person name="Palmieri A."/>
            <person name="Raymond C."/>
            <person name="Rouse G."/>
            <person name="Saenphimmachak C."/>
            <person name="Wu Z."/>
            <person name="Romero P."/>
            <person name="Gordon D."/>
            <person name="Zhang S."/>
            <person name="Yoo H."/>
            <person name="Tao Y."/>
            <person name="Biddle P."/>
            <person name="Jung M."/>
            <person name="Krespan W."/>
            <person name="Perry M."/>
            <person name="Gordon-Kamm B."/>
            <person name="Liao L."/>
            <person name="Kim S."/>
            <person name="Hendrick C."/>
            <person name="Zhao Z.-Y."/>
            <person name="Dolan M."/>
            <person name="Chumley F."/>
            <person name="Tingey S.V."/>
            <person name="Tomb J.-F."/>
            <person name="Gordon M.P."/>
            <person name="Olson M.V."/>
            <person name="Nester E.W."/>
        </authorList>
    </citation>
    <scope>NUCLEOTIDE SEQUENCE [LARGE SCALE GENOMIC DNA]</scope>
    <source>
        <strain>C58 / ATCC 33970</strain>
    </source>
</reference>
<reference key="2">
    <citation type="journal article" date="2001" name="Science">
        <title>Genome sequence of the plant pathogen and biotechnology agent Agrobacterium tumefaciens C58.</title>
        <authorList>
            <person name="Goodner B."/>
            <person name="Hinkle G."/>
            <person name="Gattung S."/>
            <person name="Miller N."/>
            <person name="Blanchard M."/>
            <person name="Qurollo B."/>
            <person name="Goldman B.S."/>
            <person name="Cao Y."/>
            <person name="Askenazi M."/>
            <person name="Halling C."/>
            <person name="Mullin L."/>
            <person name="Houmiel K."/>
            <person name="Gordon J."/>
            <person name="Vaudin M."/>
            <person name="Iartchouk O."/>
            <person name="Epp A."/>
            <person name="Liu F."/>
            <person name="Wollam C."/>
            <person name="Allinger M."/>
            <person name="Doughty D."/>
            <person name="Scott C."/>
            <person name="Lappas C."/>
            <person name="Markelz B."/>
            <person name="Flanagan C."/>
            <person name="Crowell C."/>
            <person name="Gurson J."/>
            <person name="Lomo C."/>
            <person name="Sear C."/>
            <person name="Strub G."/>
            <person name="Cielo C."/>
            <person name="Slater S."/>
        </authorList>
    </citation>
    <scope>NUCLEOTIDE SEQUENCE [LARGE SCALE GENOMIC DNA]</scope>
    <source>
        <strain>C58 / ATCC 33970</strain>
    </source>
</reference>
<protein>
    <recommendedName>
        <fullName evidence="1">Small ribosomal subunit protein uS19</fullName>
    </recommendedName>
    <alternativeName>
        <fullName evidence="2">30S ribosomal protein S19</fullName>
    </alternativeName>
</protein>
<gene>
    <name evidence="1" type="primary">rpsS</name>
    <name type="ordered locus">Atu1942</name>
    <name type="ORF">AGR_C_3549</name>
</gene>
<proteinExistence type="inferred from homology"/>
<evidence type="ECO:0000255" key="1">
    <source>
        <dbReference type="HAMAP-Rule" id="MF_00531"/>
    </source>
</evidence>
<evidence type="ECO:0000305" key="2"/>
<keyword id="KW-1185">Reference proteome</keyword>
<keyword id="KW-0687">Ribonucleoprotein</keyword>
<keyword id="KW-0689">Ribosomal protein</keyword>
<keyword id="KW-0694">RNA-binding</keyword>
<keyword id="KW-0699">rRNA-binding</keyword>